<evidence type="ECO:0000255" key="1">
    <source>
        <dbReference type="HAMAP-Rule" id="MF_00184"/>
    </source>
</evidence>
<evidence type="ECO:0000255" key="2">
    <source>
        <dbReference type="PROSITE-ProRule" id="PRU01228"/>
    </source>
</evidence>
<evidence type="ECO:0000256" key="3">
    <source>
        <dbReference type="SAM" id="MobiDB-lite"/>
    </source>
</evidence>
<evidence type="ECO:0000305" key="4"/>
<name>SYT_RHOBA</name>
<gene>
    <name evidence="1" type="primary">thrS</name>
    <name type="ordered locus">RB12129</name>
</gene>
<reference key="1">
    <citation type="journal article" date="2003" name="Proc. Natl. Acad. Sci. U.S.A.">
        <title>Complete genome sequence of the marine planctomycete Pirellula sp. strain 1.</title>
        <authorList>
            <person name="Gloeckner F.O."/>
            <person name="Kube M."/>
            <person name="Bauer M."/>
            <person name="Teeling H."/>
            <person name="Lombardot T."/>
            <person name="Ludwig W."/>
            <person name="Gade D."/>
            <person name="Beck A."/>
            <person name="Borzym K."/>
            <person name="Heitmann K."/>
            <person name="Rabus R."/>
            <person name="Schlesner H."/>
            <person name="Amann R."/>
            <person name="Reinhardt R."/>
        </authorList>
    </citation>
    <scope>NUCLEOTIDE SEQUENCE [LARGE SCALE GENOMIC DNA]</scope>
    <source>
        <strain>DSM 10527 / NCIMB 13988 / SH1</strain>
    </source>
</reference>
<protein>
    <recommendedName>
        <fullName evidence="1">Threonine--tRNA ligase</fullName>
        <ecNumber evidence="1">6.1.1.3</ecNumber>
    </recommendedName>
    <alternativeName>
        <fullName evidence="1">Threonyl-tRNA synthetase</fullName>
        <shortName evidence="1">ThrRS</shortName>
    </alternativeName>
</protein>
<sequence>MSADSPSSPASSQAAEVQVRLPDGSLKTQPADATAMDVAKEISEGLARSVVAAEVDGTIVDSFRPLGEIADDENVVPLRLLTTRDESALDVLRHSAAHVMARAIMRIYKGVSLAFGPTTSGGFYYDFDMPEKISEDDFPKIEAEIKKIIKAKEPFERFVLERDEARKLCDDLDQDLKVEHIETGLGDQATVSFYRQGEFVDLCRGPHIPHAGMIKAIKLLSVAGAYWKGDASGRQLQRVYGTAFFDKKELASYLEQIEEAKRRDHRVLGKQHGLFAINPEVGQGLCLWLPKGARVRVTLEDFLRRELLSRGYDPVYSPHIGRVEMYETSGHFPYYRDSQFAPLFGSEVGGLLDAWSTRLDKDDLSKDDEDKLIAAAEVFGVKLPDYKPSASNDAKKDVLHRWQLNHERYLLKPMNCPHHCQIFGAQPRSYRQLPLRLFEFGTVYRHEQTGELNGMMRVRGLTQDDAHIFCTADQVEEEFRATIELTKFVLESVGLDDYRVQLSLRDPDSSKYVGSEENWDHAEGALRGVLEQSGLSFNEEPGEAAFYGPKADFMVRDCIGRSWQLGTVQLDYNLPERFKLEYKGNDNATHRPVMIHRAPFGSLERFTGMLIEHFAGAFPMWLSPEQIRVLPLSDKSVEYATAVAKQLDEAGFKVTVDASDGKVQAKIRNAQIDLVNYMAVVGPKEAESGQVALRDRIEGDLGSMPIKEAIARLQKEVETRQVRQAVKGSTVSIAETGGAATDY</sequence>
<proteinExistence type="inferred from homology"/>
<accession>Q7UJ52</accession>
<keyword id="KW-0030">Aminoacyl-tRNA synthetase</keyword>
<keyword id="KW-0067">ATP-binding</keyword>
<keyword id="KW-0963">Cytoplasm</keyword>
<keyword id="KW-0436">Ligase</keyword>
<keyword id="KW-0479">Metal-binding</keyword>
<keyword id="KW-0547">Nucleotide-binding</keyword>
<keyword id="KW-0648">Protein biosynthesis</keyword>
<keyword id="KW-1185">Reference proteome</keyword>
<keyword id="KW-0694">RNA-binding</keyword>
<keyword id="KW-0820">tRNA-binding</keyword>
<keyword id="KW-0862">Zinc</keyword>
<feature type="chain" id="PRO_0000101034" description="Threonine--tRNA ligase">
    <location>
        <begin position="1"/>
        <end position="743"/>
    </location>
</feature>
<feature type="domain" description="TGS" evidence="2">
    <location>
        <begin position="13"/>
        <end position="76"/>
    </location>
</feature>
<feature type="region of interest" description="Disordered" evidence="3">
    <location>
        <begin position="1"/>
        <end position="30"/>
    </location>
</feature>
<feature type="region of interest" description="Catalytic" evidence="1">
    <location>
        <begin position="264"/>
        <end position="619"/>
    </location>
</feature>
<feature type="region of interest" description="Insert">
    <location>
        <begin position="354"/>
        <end position="404"/>
    </location>
</feature>
<feature type="compositionally biased region" description="Low complexity" evidence="3">
    <location>
        <begin position="1"/>
        <end position="15"/>
    </location>
</feature>
<feature type="binding site" evidence="1">
    <location>
        <position position="416"/>
    </location>
    <ligand>
        <name>Zn(2+)</name>
        <dbReference type="ChEBI" id="CHEBI:29105"/>
    </ligand>
</feature>
<feature type="binding site" evidence="1">
    <location>
        <position position="467"/>
    </location>
    <ligand>
        <name>Zn(2+)</name>
        <dbReference type="ChEBI" id="CHEBI:29105"/>
    </ligand>
</feature>
<feature type="binding site" evidence="1">
    <location>
        <position position="596"/>
    </location>
    <ligand>
        <name>Zn(2+)</name>
        <dbReference type="ChEBI" id="CHEBI:29105"/>
    </ligand>
</feature>
<organism>
    <name type="scientific">Rhodopirellula baltica (strain DSM 10527 / NCIMB 13988 / SH1)</name>
    <dbReference type="NCBI Taxonomy" id="243090"/>
    <lineage>
        <taxon>Bacteria</taxon>
        <taxon>Pseudomonadati</taxon>
        <taxon>Planctomycetota</taxon>
        <taxon>Planctomycetia</taxon>
        <taxon>Pirellulales</taxon>
        <taxon>Pirellulaceae</taxon>
        <taxon>Rhodopirellula</taxon>
    </lineage>
</organism>
<dbReference type="EC" id="6.1.1.3" evidence="1"/>
<dbReference type="EMBL" id="BX294154">
    <property type="protein sequence ID" value="CAD77406.1"/>
    <property type="status" value="ALT_INIT"/>
    <property type="molecule type" value="Genomic_DNA"/>
</dbReference>
<dbReference type="RefSeq" id="NP_870331.1">
    <property type="nucleotide sequence ID" value="NC_005027.1"/>
</dbReference>
<dbReference type="RefSeq" id="WP_007329329.1">
    <property type="nucleotide sequence ID" value="NC_005027.1"/>
</dbReference>
<dbReference type="SMR" id="Q7UJ52"/>
<dbReference type="FunCoup" id="Q7UJ52">
    <property type="interactions" value="555"/>
</dbReference>
<dbReference type="STRING" id="243090.RB12129"/>
<dbReference type="EnsemblBacteria" id="CAD77406">
    <property type="protein sequence ID" value="CAD77406"/>
    <property type="gene ID" value="RB12129"/>
</dbReference>
<dbReference type="KEGG" id="rba:RB12129"/>
<dbReference type="PATRIC" id="fig|243090.15.peg.5860"/>
<dbReference type="eggNOG" id="COG0441">
    <property type="taxonomic scope" value="Bacteria"/>
</dbReference>
<dbReference type="HOGENOM" id="CLU_008554_3_1_0"/>
<dbReference type="InParanoid" id="Q7UJ52"/>
<dbReference type="OrthoDB" id="9802304at2"/>
<dbReference type="Proteomes" id="UP000001025">
    <property type="component" value="Chromosome"/>
</dbReference>
<dbReference type="GO" id="GO:0005737">
    <property type="term" value="C:cytoplasm"/>
    <property type="evidence" value="ECO:0007669"/>
    <property type="project" value="UniProtKB-SubCell"/>
</dbReference>
<dbReference type="GO" id="GO:0005524">
    <property type="term" value="F:ATP binding"/>
    <property type="evidence" value="ECO:0007669"/>
    <property type="project" value="UniProtKB-UniRule"/>
</dbReference>
<dbReference type="GO" id="GO:0046872">
    <property type="term" value="F:metal ion binding"/>
    <property type="evidence" value="ECO:0007669"/>
    <property type="project" value="UniProtKB-KW"/>
</dbReference>
<dbReference type="GO" id="GO:0004829">
    <property type="term" value="F:threonine-tRNA ligase activity"/>
    <property type="evidence" value="ECO:0000318"/>
    <property type="project" value="GO_Central"/>
</dbReference>
<dbReference type="GO" id="GO:0000049">
    <property type="term" value="F:tRNA binding"/>
    <property type="evidence" value="ECO:0007669"/>
    <property type="project" value="UniProtKB-KW"/>
</dbReference>
<dbReference type="GO" id="GO:0006435">
    <property type="term" value="P:threonyl-tRNA aminoacylation"/>
    <property type="evidence" value="ECO:0000318"/>
    <property type="project" value="GO_Central"/>
</dbReference>
<dbReference type="CDD" id="cd01667">
    <property type="entry name" value="TGS_ThrRS"/>
    <property type="match status" value="1"/>
</dbReference>
<dbReference type="CDD" id="cd00860">
    <property type="entry name" value="ThrRS_anticodon"/>
    <property type="match status" value="1"/>
</dbReference>
<dbReference type="CDD" id="cd00771">
    <property type="entry name" value="ThrRS_core"/>
    <property type="match status" value="1"/>
</dbReference>
<dbReference type="FunFam" id="3.30.54.20:FF:000002">
    <property type="entry name" value="Threonine--tRNA ligase"/>
    <property type="match status" value="1"/>
</dbReference>
<dbReference type="FunFam" id="3.30.930.10:FF:000002">
    <property type="entry name" value="Threonine--tRNA ligase"/>
    <property type="match status" value="1"/>
</dbReference>
<dbReference type="FunFam" id="3.40.50.800:FF:000001">
    <property type="entry name" value="Threonine--tRNA ligase"/>
    <property type="match status" value="1"/>
</dbReference>
<dbReference type="FunFam" id="3.30.980.10:FF:000005">
    <property type="entry name" value="Threonyl-tRNA synthetase, mitochondrial"/>
    <property type="match status" value="1"/>
</dbReference>
<dbReference type="Gene3D" id="3.10.20.30">
    <property type="match status" value="1"/>
</dbReference>
<dbReference type="Gene3D" id="3.30.54.20">
    <property type="match status" value="1"/>
</dbReference>
<dbReference type="Gene3D" id="3.40.50.800">
    <property type="entry name" value="Anticodon-binding domain"/>
    <property type="match status" value="1"/>
</dbReference>
<dbReference type="Gene3D" id="3.30.930.10">
    <property type="entry name" value="Bira Bifunctional Protein, Domain 2"/>
    <property type="match status" value="1"/>
</dbReference>
<dbReference type="Gene3D" id="3.30.980.10">
    <property type="entry name" value="Threonyl-trna Synthetase, Chain A, domain 2"/>
    <property type="match status" value="1"/>
</dbReference>
<dbReference type="HAMAP" id="MF_00184">
    <property type="entry name" value="Thr_tRNA_synth"/>
    <property type="match status" value="1"/>
</dbReference>
<dbReference type="InterPro" id="IPR002314">
    <property type="entry name" value="aa-tRNA-synt_IIb"/>
</dbReference>
<dbReference type="InterPro" id="IPR006195">
    <property type="entry name" value="aa-tRNA-synth_II"/>
</dbReference>
<dbReference type="InterPro" id="IPR045864">
    <property type="entry name" value="aa-tRNA-synth_II/BPL/LPL"/>
</dbReference>
<dbReference type="InterPro" id="IPR004154">
    <property type="entry name" value="Anticodon-bd"/>
</dbReference>
<dbReference type="InterPro" id="IPR036621">
    <property type="entry name" value="Anticodon-bd_dom_sf"/>
</dbReference>
<dbReference type="InterPro" id="IPR012675">
    <property type="entry name" value="Beta-grasp_dom_sf"/>
</dbReference>
<dbReference type="InterPro" id="IPR004095">
    <property type="entry name" value="TGS"/>
</dbReference>
<dbReference type="InterPro" id="IPR012676">
    <property type="entry name" value="TGS-like"/>
</dbReference>
<dbReference type="InterPro" id="IPR002320">
    <property type="entry name" value="Thr-tRNA-ligase_IIa"/>
</dbReference>
<dbReference type="InterPro" id="IPR018163">
    <property type="entry name" value="Thr/Ala-tRNA-synth_IIc_edit"/>
</dbReference>
<dbReference type="InterPro" id="IPR047246">
    <property type="entry name" value="ThrRS_anticodon"/>
</dbReference>
<dbReference type="InterPro" id="IPR033728">
    <property type="entry name" value="ThrRS_core"/>
</dbReference>
<dbReference type="InterPro" id="IPR012947">
    <property type="entry name" value="tRNA_SAD"/>
</dbReference>
<dbReference type="NCBIfam" id="TIGR00418">
    <property type="entry name" value="thrS"/>
    <property type="match status" value="1"/>
</dbReference>
<dbReference type="PANTHER" id="PTHR11451:SF44">
    <property type="entry name" value="THREONINE--TRNA LIGASE, CHLOROPLASTIC_MITOCHONDRIAL 2"/>
    <property type="match status" value="1"/>
</dbReference>
<dbReference type="PANTHER" id="PTHR11451">
    <property type="entry name" value="THREONINE-TRNA LIGASE"/>
    <property type="match status" value="1"/>
</dbReference>
<dbReference type="Pfam" id="PF03129">
    <property type="entry name" value="HGTP_anticodon"/>
    <property type="match status" value="1"/>
</dbReference>
<dbReference type="Pfam" id="PF02824">
    <property type="entry name" value="TGS"/>
    <property type="match status" value="1"/>
</dbReference>
<dbReference type="Pfam" id="PF00587">
    <property type="entry name" value="tRNA-synt_2b"/>
    <property type="match status" value="1"/>
</dbReference>
<dbReference type="Pfam" id="PF07973">
    <property type="entry name" value="tRNA_SAD"/>
    <property type="match status" value="1"/>
</dbReference>
<dbReference type="PRINTS" id="PR01047">
    <property type="entry name" value="TRNASYNTHTHR"/>
</dbReference>
<dbReference type="SMART" id="SM00863">
    <property type="entry name" value="tRNA_SAD"/>
    <property type="match status" value="1"/>
</dbReference>
<dbReference type="SUPFAM" id="SSF52954">
    <property type="entry name" value="Class II aaRS ABD-related"/>
    <property type="match status" value="1"/>
</dbReference>
<dbReference type="SUPFAM" id="SSF55681">
    <property type="entry name" value="Class II aaRS and biotin synthetases"/>
    <property type="match status" value="1"/>
</dbReference>
<dbReference type="SUPFAM" id="SSF81271">
    <property type="entry name" value="TGS-like"/>
    <property type="match status" value="1"/>
</dbReference>
<dbReference type="SUPFAM" id="SSF55186">
    <property type="entry name" value="ThrRS/AlaRS common domain"/>
    <property type="match status" value="1"/>
</dbReference>
<dbReference type="PROSITE" id="PS50862">
    <property type="entry name" value="AA_TRNA_LIGASE_II"/>
    <property type="match status" value="1"/>
</dbReference>
<dbReference type="PROSITE" id="PS51880">
    <property type="entry name" value="TGS"/>
    <property type="match status" value="1"/>
</dbReference>
<comment type="function">
    <text evidence="1">Catalyzes the attachment of threonine to tRNA(Thr) in a two-step reaction: L-threonine is first activated by ATP to form Thr-AMP and then transferred to the acceptor end of tRNA(Thr). Also edits incorrectly charged L-seryl-tRNA(Thr).</text>
</comment>
<comment type="catalytic activity">
    <reaction evidence="1">
        <text>tRNA(Thr) + L-threonine + ATP = L-threonyl-tRNA(Thr) + AMP + diphosphate + H(+)</text>
        <dbReference type="Rhea" id="RHEA:24624"/>
        <dbReference type="Rhea" id="RHEA-COMP:9670"/>
        <dbReference type="Rhea" id="RHEA-COMP:9704"/>
        <dbReference type="ChEBI" id="CHEBI:15378"/>
        <dbReference type="ChEBI" id="CHEBI:30616"/>
        <dbReference type="ChEBI" id="CHEBI:33019"/>
        <dbReference type="ChEBI" id="CHEBI:57926"/>
        <dbReference type="ChEBI" id="CHEBI:78442"/>
        <dbReference type="ChEBI" id="CHEBI:78534"/>
        <dbReference type="ChEBI" id="CHEBI:456215"/>
        <dbReference type="EC" id="6.1.1.3"/>
    </reaction>
</comment>
<comment type="cofactor">
    <cofactor evidence="1">
        <name>Zn(2+)</name>
        <dbReference type="ChEBI" id="CHEBI:29105"/>
    </cofactor>
    <text evidence="1">Binds 1 zinc ion per subunit.</text>
</comment>
<comment type="subunit">
    <text evidence="1">Homodimer.</text>
</comment>
<comment type="subcellular location">
    <subcellularLocation>
        <location evidence="1">Cytoplasm</location>
    </subcellularLocation>
</comment>
<comment type="similarity">
    <text evidence="1">Belongs to the class-II aminoacyl-tRNA synthetase family.</text>
</comment>
<comment type="sequence caution" evidence="4">
    <conflict type="erroneous initiation">
        <sequence resource="EMBL-CDS" id="CAD77406"/>
    </conflict>
    <text>Extended N-terminus.</text>
</comment>